<dbReference type="EC" id="3.1.22.-"/>
<dbReference type="EMBL" id="CR382125">
    <property type="protein sequence ID" value="CAG99168.1"/>
    <property type="molecule type" value="Genomic_DNA"/>
</dbReference>
<dbReference type="RefSeq" id="XP_454081.1">
    <property type="nucleotide sequence ID" value="XM_454081.1"/>
</dbReference>
<dbReference type="SMR" id="Q6CPQ8"/>
<dbReference type="FunCoup" id="Q6CPQ8">
    <property type="interactions" value="230"/>
</dbReference>
<dbReference type="STRING" id="284590.Q6CPQ8"/>
<dbReference type="PaxDb" id="284590-Q6CPQ8"/>
<dbReference type="KEGG" id="kla:KLLA0_E03015g"/>
<dbReference type="eggNOG" id="KOG2379">
    <property type="taxonomic scope" value="Eukaryota"/>
</dbReference>
<dbReference type="HOGENOM" id="CLU_014329_1_0_1"/>
<dbReference type="InParanoid" id="Q6CPQ8"/>
<dbReference type="OMA" id="ELGDAMW"/>
<dbReference type="Proteomes" id="UP000000598">
    <property type="component" value="Chromosome E"/>
</dbReference>
<dbReference type="GO" id="GO:0048476">
    <property type="term" value="C:Holliday junction resolvase complex"/>
    <property type="evidence" value="ECO:0007669"/>
    <property type="project" value="TreeGrafter"/>
</dbReference>
<dbReference type="GO" id="GO:0005634">
    <property type="term" value="C:nucleus"/>
    <property type="evidence" value="ECO:0007669"/>
    <property type="project" value="UniProtKB-SubCell"/>
</dbReference>
<dbReference type="GO" id="GO:0048257">
    <property type="term" value="F:3'-flap endonuclease activity"/>
    <property type="evidence" value="ECO:0007669"/>
    <property type="project" value="TreeGrafter"/>
</dbReference>
<dbReference type="GO" id="GO:0008821">
    <property type="term" value="F:crossover junction DNA endonuclease activity"/>
    <property type="evidence" value="ECO:0007669"/>
    <property type="project" value="InterPro"/>
</dbReference>
<dbReference type="GO" id="GO:0003677">
    <property type="term" value="F:DNA binding"/>
    <property type="evidence" value="ECO:0007669"/>
    <property type="project" value="InterPro"/>
</dbReference>
<dbReference type="GO" id="GO:0046872">
    <property type="term" value="F:metal ion binding"/>
    <property type="evidence" value="ECO:0007669"/>
    <property type="project" value="UniProtKB-KW"/>
</dbReference>
<dbReference type="GO" id="GO:0006308">
    <property type="term" value="P:DNA catabolic process"/>
    <property type="evidence" value="ECO:0007669"/>
    <property type="project" value="InterPro"/>
</dbReference>
<dbReference type="GO" id="GO:0000727">
    <property type="term" value="P:double-strand break repair via break-induced replication"/>
    <property type="evidence" value="ECO:0007669"/>
    <property type="project" value="TreeGrafter"/>
</dbReference>
<dbReference type="GO" id="GO:0031573">
    <property type="term" value="P:mitotic intra-S DNA damage checkpoint signaling"/>
    <property type="evidence" value="ECO:0007669"/>
    <property type="project" value="TreeGrafter"/>
</dbReference>
<dbReference type="GO" id="GO:0000712">
    <property type="term" value="P:resolution of meiotic recombination intermediates"/>
    <property type="evidence" value="ECO:0007669"/>
    <property type="project" value="TreeGrafter"/>
</dbReference>
<dbReference type="CDD" id="cd21036">
    <property type="entry name" value="WH_MUS81"/>
    <property type="match status" value="1"/>
</dbReference>
<dbReference type="CDD" id="cd20074">
    <property type="entry name" value="XPF_nuclease_Mus81"/>
    <property type="match status" value="1"/>
</dbReference>
<dbReference type="FunFam" id="1.10.10.10:FF:000307">
    <property type="entry name" value="Crossover junction endonuclease MUS81"/>
    <property type="match status" value="1"/>
</dbReference>
<dbReference type="FunFam" id="3.40.50.10130:FF:000005">
    <property type="entry name" value="crossover junction endonuclease MUS81 isoform X1"/>
    <property type="match status" value="1"/>
</dbReference>
<dbReference type="Gene3D" id="3.40.50.10130">
    <property type="match status" value="1"/>
</dbReference>
<dbReference type="Gene3D" id="1.10.150.670">
    <property type="entry name" value="Crossover junction endonuclease EME1, DNA-binding domain"/>
    <property type="match status" value="1"/>
</dbReference>
<dbReference type="Gene3D" id="1.10.150.110">
    <property type="entry name" value="DNA polymerase beta, N-terminal domain-like"/>
    <property type="match status" value="1"/>
</dbReference>
<dbReference type="Gene3D" id="1.10.10.10">
    <property type="entry name" value="Winged helix-like DNA-binding domain superfamily/Winged helix DNA-binding domain"/>
    <property type="match status" value="1"/>
</dbReference>
<dbReference type="InterPro" id="IPR027421">
    <property type="entry name" value="DNA_pol_lamdba_lyase_dom_sf"/>
</dbReference>
<dbReference type="InterPro" id="IPR042530">
    <property type="entry name" value="EME1/EME2_C"/>
</dbReference>
<dbReference type="InterPro" id="IPR006166">
    <property type="entry name" value="ERCC4_domain"/>
</dbReference>
<dbReference type="InterPro" id="IPR033309">
    <property type="entry name" value="Mus81"/>
</dbReference>
<dbReference type="InterPro" id="IPR011335">
    <property type="entry name" value="Restrct_endonuc-II-like"/>
</dbReference>
<dbReference type="InterPro" id="IPR036388">
    <property type="entry name" value="WH-like_DNA-bd_sf"/>
</dbReference>
<dbReference type="InterPro" id="IPR047417">
    <property type="entry name" value="WH_MUS81"/>
</dbReference>
<dbReference type="InterPro" id="IPR047416">
    <property type="entry name" value="XPF_nuclease_Mus81"/>
</dbReference>
<dbReference type="PANTHER" id="PTHR13451">
    <property type="entry name" value="CLASS II CROSSOVER JUNCTION ENDONUCLEASE MUS81"/>
    <property type="match status" value="1"/>
</dbReference>
<dbReference type="PANTHER" id="PTHR13451:SF0">
    <property type="entry name" value="CROSSOVER JUNCTION ENDONUCLEASE MUS81"/>
    <property type="match status" value="1"/>
</dbReference>
<dbReference type="Pfam" id="PF21292">
    <property type="entry name" value="EME1-MUS81_C"/>
    <property type="match status" value="1"/>
</dbReference>
<dbReference type="Pfam" id="PF02732">
    <property type="entry name" value="ERCC4"/>
    <property type="match status" value="1"/>
</dbReference>
<dbReference type="Pfam" id="PF21136">
    <property type="entry name" value="MUS81-like_WH"/>
    <property type="match status" value="1"/>
</dbReference>
<dbReference type="SMART" id="SM00891">
    <property type="entry name" value="ERCC4"/>
    <property type="match status" value="1"/>
</dbReference>
<dbReference type="SUPFAM" id="SSF47802">
    <property type="entry name" value="DNA polymerase beta, N-terminal domain-like"/>
    <property type="match status" value="1"/>
</dbReference>
<dbReference type="SUPFAM" id="SSF52980">
    <property type="entry name" value="Restriction endonuclease-like"/>
    <property type="match status" value="1"/>
</dbReference>
<accession>Q6CPQ8</accession>
<reference key="1">
    <citation type="journal article" date="2004" name="Nature">
        <title>Genome evolution in yeasts.</title>
        <authorList>
            <person name="Dujon B."/>
            <person name="Sherman D."/>
            <person name="Fischer G."/>
            <person name="Durrens P."/>
            <person name="Casaregola S."/>
            <person name="Lafontaine I."/>
            <person name="de Montigny J."/>
            <person name="Marck C."/>
            <person name="Neuveglise C."/>
            <person name="Talla E."/>
            <person name="Goffard N."/>
            <person name="Frangeul L."/>
            <person name="Aigle M."/>
            <person name="Anthouard V."/>
            <person name="Babour A."/>
            <person name="Barbe V."/>
            <person name="Barnay S."/>
            <person name="Blanchin S."/>
            <person name="Beckerich J.-M."/>
            <person name="Beyne E."/>
            <person name="Bleykasten C."/>
            <person name="Boisrame A."/>
            <person name="Boyer J."/>
            <person name="Cattolico L."/>
            <person name="Confanioleri F."/>
            <person name="de Daruvar A."/>
            <person name="Despons L."/>
            <person name="Fabre E."/>
            <person name="Fairhead C."/>
            <person name="Ferry-Dumazet H."/>
            <person name="Groppi A."/>
            <person name="Hantraye F."/>
            <person name="Hennequin C."/>
            <person name="Jauniaux N."/>
            <person name="Joyet P."/>
            <person name="Kachouri R."/>
            <person name="Kerrest A."/>
            <person name="Koszul R."/>
            <person name="Lemaire M."/>
            <person name="Lesur I."/>
            <person name="Ma L."/>
            <person name="Muller H."/>
            <person name="Nicaud J.-M."/>
            <person name="Nikolski M."/>
            <person name="Oztas S."/>
            <person name="Ozier-Kalogeropoulos O."/>
            <person name="Pellenz S."/>
            <person name="Potier S."/>
            <person name="Richard G.-F."/>
            <person name="Straub M.-L."/>
            <person name="Suleau A."/>
            <person name="Swennen D."/>
            <person name="Tekaia F."/>
            <person name="Wesolowski-Louvel M."/>
            <person name="Westhof E."/>
            <person name="Wirth B."/>
            <person name="Zeniou-Meyer M."/>
            <person name="Zivanovic Y."/>
            <person name="Bolotin-Fukuhara M."/>
            <person name="Thierry A."/>
            <person name="Bouchier C."/>
            <person name="Caudron B."/>
            <person name="Scarpelli C."/>
            <person name="Gaillardin C."/>
            <person name="Weissenbach J."/>
            <person name="Wincker P."/>
            <person name="Souciet J.-L."/>
        </authorList>
    </citation>
    <scope>NUCLEOTIDE SEQUENCE [LARGE SCALE GENOMIC DNA]</scope>
    <source>
        <strain>ATCC 8585 / CBS 2359 / DSM 70799 / NBRC 1267 / NRRL Y-1140 / WM37</strain>
    </source>
</reference>
<feature type="chain" id="PRO_0000223645" description="Crossover junction endonuclease MUS81">
    <location>
        <begin position="1"/>
        <end position="614"/>
    </location>
</feature>
<feature type="domain" description="ERCC4">
    <location>
        <begin position="333"/>
        <end position="430"/>
    </location>
</feature>
<feature type="region of interest" description="Disordered" evidence="2">
    <location>
        <begin position="80"/>
        <end position="132"/>
    </location>
</feature>
<feature type="compositionally biased region" description="Low complexity" evidence="2">
    <location>
        <begin position="87"/>
        <end position="101"/>
    </location>
</feature>
<feature type="compositionally biased region" description="Basic residues" evidence="2">
    <location>
        <begin position="123"/>
        <end position="132"/>
    </location>
</feature>
<name>MUS81_KLULA</name>
<keyword id="KW-0227">DNA damage</keyword>
<keyword id="KW-0233">DNA recombination</keyword>
<keyword id="KW-0234">DNA repair</keyword>
<keyword id="KW-0255">Endonuclease</keyword>
<keyword id="KW-0378">Hydrolase</keyword>
<keyword id="KW-0460">Magnesium</keyword>
<keyword id="KW-0469">Meiosis</keyword>
<keyword id="KW-0479">Metal-binding</keyword>
<keyword id="KW-0540">Nuclease</keyword>
<keyword id="KW-0539">Nucleus</keyword>
<keyword id="KW-1185">Reference proteome</keyword>
<gene>
    <name type="primary">MUS81</name>
    <name type="ordered locus">KLLA0E02948g</name>
</gene>
<sequence length="614" mass="70413">MSIPSDAKQLYAEFLQQEVNQSTSAHQEKLVMVLNRALFALKNYPDPIYHPKDLLKVKGIGQTTMNKLSKRLKTYCEENGYSFPEESSSTDNTQSTQNDSNPSNTQKTRVRTLEPEENESQGTRKRRKKKYIPRNRSGGYGILLGLLELGCDKDGTACTRRQLIAVASKYCDQSYEKNPSTKEFYSAWSAIKSLKTNDLVIEQGRPSQFSLTEAGTILADSLKTANNIEFDVSSVYERRLNRGNTQNSFTNDEHDHTVNFSGLMNHANMSINESANSSRLFLDATANSSRIEQNEEPEVSAEISTPIPKQKVSKGRWKGVKYELWKPDSYDIILHIDHREVRSKEDRGFFARKLLQRGIETESSSLTVGDMIWLAKHKQSGQQCALDFIVERKRLDDLVISIRDNRFSEQKNRLQKTGCKHIFYLVEETTGYNVSDSADMMKTSIWTTVIYNDFHIKRTRNADTTVQWLTDMSLIIKELYSRKSLVVINHDHITNQSIYLTSLKMFRTEFERNKEIECCHNYESMQSAMVKTNLMTVKELYLRALMSVKGISLEKALMIQSRYPTFKTLLKAYRRCAAEADAKTLIQNELKDAPGNRKIGKSLSHTLWETFGKL</sequence>
<proteinExistence type="inferred from homology"/>
<evidence type="ECO:0000250" key="1"/>
<evidence type="ECO:0000256" key="2">
    <source>
        <dbReference type="SAM" id="MobiDB-lite"/>
    </source>
</evidence>
<evidence type="ECO:0000305" key="3"/>
<organism>
    <name type="scientific">Kluyveromyces lactis (strain ATCC 8585 / CBS 2359 / DSM 70799 / NBRC 1267 / NRRL Y-1140 / WM37)</name>
    <name type="common">Yeast</name>
    <name type="synonym">Candida sphaerica</name>
    <dbReference type="NCBI Taxonomy" id="284590"/>
    <lineage>
        <taxon>Eukaryota</taxon>
        <taxon>Fungi</taxon>
        <taxon>Dikarya</taxon>
        <taxon>Ascomycota</taxon>
        <taxon>Saccharomycotina</taxon>
        <taxon>Saccharomycetes</taxon>
        <taxon>Saccharomycetales</taxon>
        <taxon>Saccharomycetaceae</taxon>
        <taxon>Kluyveromyces</taxon>
    </lineage>
</organism>
<protein>
    <recommendedName>
        <fullName>Crossover junction endonuclease MUS81</fullName>
        <ecNumber>3.1.22.-</ecNumber>
    </recommendedName>
</protein>
<comment type="function">
    <text evidence="1">Interacts with EME1 to form a DNA structure-specific endonuclease with substrate preference for branched DNA structures with a 5'-end at the branch nick. Typical substrates include 3'-flap structures, D-loops, replication forks and nicked Holliday junctions. May be required in mitosis for the processing of stalled or collapsed replication fork intermediates. May be required in meiosis for the repair of meiosis-specific double strand breaks subsequent to single-end invasion (SEI) (By similarity).</text>
</comment>
<comment type="cofactor">
    <cofactor evidence="1">
        <name>Mg(2+)</name>
        <dbReference type="ChEBI" id="CHEBI:18420"/>
    </cofactor>
</comment>
<comment type="subunit">
    <text evidence="1">Interacts with EME1.</text>
</comment>
<comment type="subcellular location">
    <subcellularLocation>
        <location evidence="1">Nucleus</location>
    </subcellularLocation>
</comment>
<comment type="similarity">
    <text evidence="3">Belongs to the XPF family.</text>
</comment>